<reference key="1">
    <citation type="journal article" date="1994" name="Nature">
        <title>2.2 Mb of contiguous nucleotide sequence from chromosome III of C. elegans.</title>
        <authorList>
            <person name="Wilson R."/>
            <person name="Ainscough R."/>
            <person name="Anderson K."/>
            <person name="Baynes C."/>
            <person name="Berks M."/>
            <person name="Bonfield J."/>
            <person name="Burton J."/>
            <person name="Connell M."/>
            <person name="Copsey T."/>
            <person name="Cooper J."/>
            <person name="Coulson A."/>
            <person name="Craxton M."/>
            <person name="Dear S."/>
            <person name="Du Z."/>
            <person name="Durbin R."/>
            <person name="Favello A."/>
            <person name="Fraser A."/>
            <person name="Fulton L."/>
            <person name="Gardner A."/>
            <person name="Green P."/>
            <person name="Hawkins T."/>
            <person name="Hillier L."/>
            <person name="Jier M."/>
            <person name="Johnston L."/>
            <person name="Jones M."/>
            <person name="Kershaw J."/>
            <person name="Kirsten J."/>
            <person name="Laisster N."/>
            <person name="Latreille P."/>
            <person name="Lightning J."/>
            <person name="Lloyd C."/>
            <person name="Mortimore B."/>
            <person name="O'Callaghan M."/>
            <person name="Parsons J."/>
            <person name="Percy C."/>
            <person name="Rifken L."/>
            <person name="Roopra A."/>
            <person name="Saunders D."/>
            <person name="Shownkeen R."/>
            <person name="Sims M."/>
            <person name="Smaldon N."/>
            <person name="Smith A."/>
            <person name="Smith M."/>
            <person name="Sonnhammer E."/>
            <person name="Staden R."/>
            <person name="Sulston J."/>
            <person name="Thierry-Mieg J."/>
            <person name="Thomas K."/>
            <person name="Vaudin M."/>
            <person name="Vaughan K."/>
            <person name="Waterston R."/>
            <person name="Watson A."/>
            <person name="Weinstock L."/>
            <person name="Wilkinson-Sproat J."/>
            <person name="Wohldman P."/>
        </authorList>
    </citation>
    <scope>NUCLEOTIDE SEQUENCE [LARGE SCALE GENOMIC DNA]</scope>
    <source>
        <strain>Bristol N2</strain>
    </source>
</reference>
<reference key="2">
    <citation type="journal article" date="1998" name="Science">
        <title>Genome sequence of the nematode C. elegans: a platform for investigating biology.</title>
        <authorList>
            <consortium name="The C. elegans sequencing consortium"/>
        </authorList>
    </citation>
    <scope>NUCLEOTIDE SEQUENCE [LARGE SCALE GENOMIC DNA]</scope>
    <source>
        <strain>Bristol N2</strain>
    </source>
</reference>
<protein>
    <recommendedName>
        <fullName>Putative zinc finger protein C02F5.12</fullName>
    </recommendedName>
</protein>
<name>YKKA_CAEEL</name>
<dbReference type="EMBL" id="FO080288">
    <property type="protein sequence ID" value="CCD62637.1"/>
    <property type="molecule type" value="Genomic_DNA"/>
</dbReference>
<dbReference type="RefSeq" id="NP_498805.2">
    <property type="nucleotide sequence ID" value="NM_066404.6"/>
</dbReference>
<dbReference type="SMR" id="Q95QY7"/>
<dbReference type="BioGRID" id="46985">
    <property type="interactions" value="2"/>
</dbReference>
<dbReference type="FunCoup" id="Q95QY7">
    <property type="interactions" value="871"/>
</dbReference>
<dbReference type="IntAct" id="Q95QY7">
    <property type="interactions" value="2"/>
</dbReference>
<dbReference type="PaxDb" id="6239-C02F5.12"/>
<dbReference type="PeptideAtlas" id="Q95QY7"/>
<dbReference type="EnsemblMetazoa" id="C02F5.12.1">
    <property type="protein sequence ID" value="C02F5.12.1"/>
    <property type="gene ID" value="WBGene00015352"/>
</dbReference>
<dbReference type="GeneID" id="182124"/>
<dbReference type="KEGG" id="cel:CELE_C02F5.12"/>
<dbReference type="UCSC" id="C02F5.12">
    <property type="organism name" value="c. elegans"/>
</dbReference>
<dbReference type="AGR" id="WB:WBGene00015352"/>
<dbReference type="CTD" id="182124"/>
<dbReference type="WormBase" id="C02F5.12">
    <property type="protein sequence ID" value="CE39127"/>
    <property type="gene ID" value="WBGene00015352"/>
</dbReference>
<dbReference type="eggNOG" id="ENOG502TH3X">
    <property type="taxonomic scope" value="Eukaryota"/>
</dbReference>
<dbReference type="GeneTree" id="ENSGT00970000195986"/>
<dbReference type="HOGENOM" id="CLU_722051_0_0_1"/>
<dbReference type="InParanoid" id="Q95QY7"/>
<dbReference type="OMA" id="CGFECTN"/>
<dbReference type="OrthoDB" id="5872476at2759"/>
<dbReference type="PRO" id="PR:Q95QY7"/>
<dbReference type="Proteomes" id="UP000001940">
    <property type="component" value="Chromosome III"/>
</dbReference>
<dbReference type="Bgee" id="WBGene00015352">
    <property type="expression patterns" value="Expressed in pharyngeal muscle cell (C elegans) and 4 other cell types or tissues"/>
</dbReference>
<dbReference type="GO" id="GO:0005634">
    <property type="term" value="C:nucleus"/>
    <property type="evidence" value="ECO:0007669"/>
    <property type="project" value="UniProtKB-SubCell"/>
</dbReference>
<dbReference type="GO" id="GO:0003677">
    <property type="term" value="F:DNA binding"/>
    <property type="evidence" value="ECO:0007669"/>
    <property type="project" value="UniProtKB-KW"/>
</dbReference>
<dbReference type="GO" id="GO:0008270">
    <property type="term" value="F:zinc ion binding"/>
    <property type="evidence" value="ECO:0007669"/>
    <property type="project" value="UniProtKB-KW"/>
</dbReference>
<dbReference type="InterPro" id="IPR053360">
    <property type="entry name" value="Zinc_finger_domain"/>
</dbReference>
<dbReference type="InterPro" id="IPR013087">
    <property type="entry name" value="Znf_C2H2_type"/>
</dbReference>
<dbReference type="PANTHER" id="PTHR36945">
    <property type="entry name" value="HIGH INCIDENCE OF MALES (INCREASED X CHROMOSOME LOSS)-RELATED-RELATED"/>
    <property type="match status" value="1"/>
</dbReference>
<dbReference type="PANTHER" id="PTHR36945:SF1">
    <property type="entry name" value="ZINC FINGER PROTEIN C02F5.12-RELATED"/>
    <property type="match status" value="1"/>
</dbReference>
<dbReference type="PROSITE" id="PS00028">
    <property type="entry name" value="ZINC_FINGER_C2H2_1"/>
    <property type="match status" value="1"/>
</dbReference>
<evidence type="ECO:0000256" key="1">
    <source>
        <dbReference type="SAM" id="MobiDB-lite"/>
    </source>
</evidence>
<evidence type="ECO:0000305" key="2"/>
<comment type="subcellular location">
    <subcellularLocation>
        <location evidence="2">Nucleus</location>
    </subcellularLocation>
</comment>
<feature type="chain" id="PRO_0000046899" description="Putative zinc finger protein C02F5.12">
    <location>
        <begin position="1"/>
        <end position="380"/>
    </location>
</feature>
<feature type="zinc finger region" description="C2H2-type">
    <location>
        <begin position="271"/>
        <end position="294"/>
    </location>
</feature>
<feature type="region of interest" description="Disordered" evidence="1">
    <location>
        <begin position="137"/>
        <end position="187"/>
    </location>
</feature>
<feature type="compositionally biased region" description="Polar residues" evidence="1">
    <location>
        <begin position="142"/>
        <end position="152"/>
    </location>
</feature>
<feature type="compositionally biased region" description="Polar residues" evidence="1">
    <location>
        <begin position="171"/>
        <end position="187"/>
    </location>
</feature>
<keyword id="KW-0238">DNA-binding</keyword>
<keyword id="KW-0479">Metal-binding</keyword>
<keyword id="KW-0539">Nucleus</keyword>
<keyword id="KW-1185">Reference proteome</keyword>
<keyword id="KW-0862">Zinc</keyword>
<keyword id="KW-0863">Zinc-finger</keyword>
<organism>
    <name type="scientific">Caenorhabditis elegans</name>
    <dbReference type="NCBI Taxonomy" id="6239"/>
    <lineage>
        <taxon>Eukaryota</taxon>
        <taxon>Metazoa</taxon>
        <taxon>Ecdysozoa</taxon>
        <taxon>Nematoda</taxon>
        <taxon>Chromadorea</taxon>
        <taxon>Rhabditida</taxon>
        <taxon>Rhabditina</taxon>
        <taxon>Rhabditomorpha</taxon>
        <taxon>Rhabditoidea</taxon>
        <taxon>Rhabditidae</taxon>
        <taxon>Peloderinae</taxon>
        <taxon>Caenorhabditis</taxon>
    </lineage>
</organism>
<gene>
    <name type="ORF">C02F5.12</name>
</gene>
<accession>Q95QY7</accession>
<proteinExistence type="predicted"/>
<sequence length="380" mass="42387">MSTYIQVNIYNQTLEVLKMRGLDLQSILKTIGCPDSWVTEVPIHPPAQKIQKPATPPTSCAPQLVSSPKCLESISAQSQNVLKKPFKSISAELGFAQPLNLVDTLGLKPRDSDAMSRGKRPASVLKGLFDDWDPTANLDIPGTSSDIPSDPSSALKVPKKEVLDESEEILDQTSGSSSFSLNDSEQANEQERNIIEDLLRQQMFTESKIKNEEASLLKGLKKGLGEELESSHANYVITCNFPGCGLKYNWRVKYGKLRLLDHALTHSNRKIPCKLCGFECTNVRRMRSHYAKAHPNERVEGYGMKALVSGDSSRIGDGVDGDIDQQVSDDELKELWNNCFSESIHLVGQASGFVEGEKYRRMTKRRKLDREAMNSMNFMF</sequence>